<organismHost>
    <name type="scientific">Homo sapiens</name>
    <name type="common">Human</name>
    <dbReference type="NCBI Taxonomy" id="9606"/>
</organismHost>
<dbReference type="EMBL" id="L22579">
    <property type="protein sequence ID" value="AAA60869.1"/>
    <property type="molecule type" value="Genomic_DNA"/>
</dbReference>
<dbReference type="EMBL" id="X76268">
    <property type="protein sequence ID" value="CAA53890.1"/>
    <property type="molecule type" value="Genomic_DNA"/>
</dbReference>
<dbReference type="PIR" id="G72165">
    <property type="entry name" value="G72165"/>
</dbReference>
<dbReference type="PIR" id="T28559">
    <property type="entry name" value="T28559"/>
</dbReference>
<dbReference type="RefSeq" id="NP_042165.1">
    <property type="nucleotide sequence ID" value="NC_001611.1"/>
</dbReference>
<dbReference type="GeneID" id="1486492"/>
<dbReference type="KEGG" id="vg:1486492"/>
<dbReference type="Proteomes" id="UP000119805">
    <property type="component" value="Segment"/>
</dbReference>
<dbReference type="GO" id="GO:0016020">
    <property type="term" value="C:membrane"/>
    <property type="evidence" value="ECO:0007669"/>
    <property type="project" value="UniProtKB-KW"/>
</dbReference>
<dbReference type="GO" id="GO:0019031">
    <property type="term" value="C:viral envelope"/>
    <property type="evidence" value="ECO:0007669"/>
    <property type="project" value="UniProtKB-KW"/>
</dbReference>
<dbReference type="GO" id="GO:0055036">
    <property type="term" value="C:virion membrane"/>
    <property type="evidence" value="ECO:0007669"/>
    <property type="project" value="UniProtKB-SubCell"/>
</dbReference>
<dbReference type="GO" id="GO:0005524">
    <property type="term" value="F:ATP binding"/>
    <property type="evidence" value="ECO:0007669"/>
    <property type="project" value="UniProtKB-KW"/>
</dbReference>
<dbReference type="GO" id="GO:0003677">
    <property type="term" value="F:DNA binding"/>
    <property type="evidence" value="ECO:0007669"/>
    <property type="project" value="UniProtKB-KW"/>
</dbReference>
<dbReference type="GO" id="GO:0004386">
    <property type="term" value="F:helicase activity"/>
    <property type="evidence" value="ECO:0007669"/>
    <property type="project" value="UniProtKB-KW"/>
</dbReference>
<dbReference type="GO" id="GO:0016787">
    <property type="term" value="F:hydrolase activity"/>
    <property type="evidence" value="ECO:0007669"/>
    <property type="project" value="UniProtKB-KW"/>
</dbReference>
<dbReference type="GO" id="GO:0006353">
    <property type="term" value="P:DNA-templated transcription termination"/>
    <property type="evidence" value="ECO:0007669"/>
    <property type="project" value="UniProtKB-KW"/>
</dbReference>
<dbReference type="InterPro" id="IPR007977">
    <property type="entry name" value="Poxvirus_OPG144"/>
</dbReference>
<dbReference type="Pfam" id="PF05313">
    <property type="entry name" value="Pox_P21"/>
    <property type="match status" value="1"/>
</dbReference>
<comment type="function">
    <text evidence="2">Envelope protein which participates in virus morphogenesis. Needed for an early step in viral crescent membrane formation by interacting with OPG125 scaffold protein. Its interaction with OPG125 scaffold protein leads to the formation of rigid, crescent-shaped membranes that assemble around the cytoplasmic virus factory. Acts as a membrane anchor for the protein OPG154. OPG144-OPG154 virus envelope protein might be involved in fusion or attachment, and can further associate with OPG153.</text>
</comment>
<comment type="subunit">
    <text evidence="2">Homodimer; disulfide-linked. Interacts (via N-terminus) with OPG125 scaffold; this interaction helps OPG125 to associate with membranes. Interacts with OPG140. Interacts with OPG154; this interaction allows OPG154 to be anchored in the mature virion (MV) membrane. Part of a complex composed of OPG144, OPG153 and OPG154.</text>
</comment>
<comment type="subcellular location">
    <subcellularLocation>
        <location evidence="2">Virion membrane</location>
        <topology evidence="2">Multi-pass membrane protein</topology>
    </subcellularLocation>
    <text evidence="2">The 23 kDa precursor is associated with immature virions (IV) and the final 21 kDa form is present in mature virions (MV).</text>
</comment>
<comment type="PTM">
    <text evidence="2">The 23 kDa precursor is cleaved into a final 21 kDa form by the OPG083 protease during virus maturation.</text>
</comment>
<comment type="PTM">
    <text evidence="2">Phosphorylated on tyrosine and threonine. Its phosphorylation state is regulated by the OPG054 kinase and the OPG106 phosphatase. Phosphorylation by OPG054 kinase seems to be required to form the membranes associated with IV.</text>
</comment>
<comment type="PTM">
    <text evidence="2">Not glycosylated.</text>
</comment>
<comment type="similarity">
    <text evidence="3">Belongs to the orthopoxvirus OPG144 family.</text>
</comment>
<accession>P0DOR6</accession>
<accession>P16711</accession>
<accession>P68594</accession>
<reference key="1">
    <citation type="journal article" date="1993" name="Nature">
        <title>Potential virulence determinants in terminal regions of variola smallpox virus genome.</title>
        <authorList>
            <person name="Massung R.F."/>
            <person name="Esposito J.J."/>
            <person name="Liu L.I."/>
            <person name="Qi J."/>
            <person name="Utterback T.R."/>
            <person name="Knight J.C."/>
            <person name="Aubin L."/>
            <person name="Yuran T.E."/>
            <person name="Parsons J.M."/>
            <person name="Loparev V.N."/>
            <person name="Selivanov N.A."/>
            <person name="Cavallaro K.F."/>
            <person name="Kerlavage A.R."/>
            <person name="Mahy B.W.J."/>
            <person name="Venter J.C."/>
        </authorList>
    </citation>
    <scope>NUCLEOTIDE SEQUENCE [GENOMIC DNA]</scope>
    <source>
        <strain>Bangladesh-1975</strain>
    </source>
</reference>
<reference key="2">
    <citation type="submission" date="1995-12" db="EMBL/GenBank/DDBJ databases">
        <title>XhoI-D DNA fragment of Variola minor virus strain Garcia-1966.</title>
        <authorList>
            <person name="Shchelkunov S.N."/>
            <person name="Totmenin A.V."/>
            <person name="Sosnovtsev S.V."/>
            <person name="Safronov P.F."/>
            <person name="Resenchuk S.M."/>
            <person name="Blinov V.M."/>
            <person name="Sandakhchiev L.S."/>
        </authorList>
    </citation>
    <scope>NUCLEOTIDE SEQUENCE [GENOMIC DNA]</scope>
    <source>
        <strain>Garcia-1966</strain>
    </source>
</reference>
<gene>
    <name type="primary">OPG144</name>
    <name type="ORF">A17L</name>
    <name type="ORF">A18L</name>
</gene>
<keyword id="KW-0067">ATP-binding</keyword>
<keyword id="KW-1015">Disulfide bond</keyword>
<keyword id="KW-0238">DNA-binding</keyword>
<keyword id="KW-0347">Helicase</keyword>
<keyword id="KW-0378">Hydrolase</keyword>
<keyword id="KW-0426">Late protein</keyword>
<keyword id="KW-0472">Membrane</keyword>
<keyword id="KW-0547">Nucleotide-binding</keyword>
<keyword id="KW-0597">Phosphoprotein</keyword>
<keyword id="KW-0804">Transcription</keyword>
<keyword id="KW-0805">Transcription regulation</keyword>
<keyword id="KW-0806">Transcription termination</keyword>
<keyword id="KW-0812">Transmembrane</keyword>
<keyword id="KW-1133">Transmembrane helix</keyword>
<keyword id="KW-0261">Viral envelope protein</keyword>
<keyword id="KW-0946">Virion</keyword>
<sequence length="203" mass="22999">MSYLRYYNMLDDFSAGAGVLDKDLFTEEQQQSFMPKDGGMMQNDYGGMNDYLGIFKNNDVRTLLGLILFVLALYSPPLISILMIFISSFLLPLTSLVITYCLVTQMYRGGNGNTVGMSIVCIVAAVIIMAINVFTNSQIFNIISYIILFILFFAYVMNIERQDYRRSINVTIPEQYTCNKPYTAGNKVDVDIPTFNSLNTDDY</sequence>
<name>PG144_VARV</name>
<organism>
    <name type="scientific">Variola virus</name>
    <dbReference type="NCBI Taxonomy" id="10255"/>
    <lineage>
        <taxon>Viruses</taxon>
        <taxon>Varidnaviria</taxon>
        <taxon>Bamfordvirae</taxon>
        <taxon>Nucleocytoviricota</taxon>
        <taxon>Pokkesviricetes</taxon>
        <taxon>Chitovirales</taxon>
        <taxon>Poxviridae</taxon>
        <taxon>Chordopoxvirinae</taxon>
        <taxon>Orthopoxvirus</taxon>
    </lineage>
</organism>
<evidence type="ECO:0000250" key="1"/>
<evidence type="ECO:0000250" key="2">
    <source>
        <dbReference type="UniProtKB" id="P68593"/>
    </source>
</evidence>
<evidence type="ECO:0000305" key="3"/>
<protein>
    <recommendedName>
        <fullName>Virion membrane protein OPG144 precursor</fullName>
    </recommendedName>
    <alternativeName>
        <fullName>23 kDa late protein</fullName>
    </alternativeName>
    <component>
        <recommendedName>
            <fullName>Mature 21 kDa protein OPG144</fullName>
        </recommendedName>
    </component>
</protein>
<proteinExistence type="inferred from homology"/>
<feature type="chain" id="PRO_0000448155" description="Virion membrane protein OPG144 precursor">
    <location>
        <begin position="1"/>
        <end position="203"/>
    </location>
</feature>
<feature type="propeptide" id="PRO_0000448156" evidence="2">
    <location>
        <begin position="1"/>
        <end position="16"/>
    </location>
</feature>
<feature type="chain" id="PRO_0000448157" description="Mature 21 kDa protein OPG144" evidence="1">
    <location>
        <begin position="17"/>
        <end position="185"/>
    </location>
</feature>
<feature type="propeptide" id="PRO_0000448158" evidence="2">
    <location>
        <begin position="185"/>
        <end position="203"/>
    </location>
</feature>
<feature type="topological domain" description="Virion surface" evidence="1">
    <location>
        <begin position="1"/>
        <end position="65"/>
    </location>
</feature>
<feature type="transmembrane region" description="Helical" evidence="1">
    <location>
        <begin position="66"/>
        <end position="86"/>
    </location>
</feature>
<feature type="topological domain" description="Intravirion" evidence="1">
    <location>
        <begin position="87"/>
        <end position="138"/>
    </location>
</feature>
<feature type="transmembrane region" description="Helical" evidence="1">
    <location>
        <begin position="139"/>
        <end position="159"/>
    </location>
</feature>
<feature type="topological domain" description="Virion surface" evidence="1">
    <location>
        <begin position="160"/>
        <end position="203"/>
    </location>
</feature>
<feature type="region of interest" description="Binding to OPG125 scaffold protein" evidence="2">
    <location>
        <begin position="1"/>
        <end position="38"/>
    </location>
</feature>
<feature type="site" description="Cleavage; by OPG083 protease" evidence="2">
    <location>
        <begin position="16"/>
        <end position="17"/>
    </location>
</feature>
<feature type="site" description="Cleavage; by OPG083 protease" evidence="2">
    <location>
        <begin position="185"/>
        <end position="186"/>
    </location>
</feature>
<feature type="modified residue" description="Phosphotyrosine" evidence="2">
    <location>
        <position position="203"/>
    </location>
</feature>
<feature type="disulfide bond" evidence="2">
    <location>
        <begin position="101"/>
        <end position="121"/>
    </location>
</feature>
<feature type="disulfide bond" description="Interchain" evidence="2">
    <location>
        <position position="178"/>
    </location>
</feature>